<proteinExistence type="inferred from homology"/>
<accession>B3QJL9</accession>
<keyword id="KW-0963">Cytoplasm</keyword>
<keyword id="KW-0444">Lipid biosynthesis</keyword>
<keyword id="KW-0443">Lipid metabolism</keyword>
<keyword id="KW-0594">Phospholipid biosynthesis</keyword>
<keyword id="KW-1208">Phospholipid metabolism</keyword>
<keyword id="KW-0808">Transferase</keyword>
<dbReference type="EC" id="2.3.1.274" evidence="1"/>
<dbReference type="EMBL" id="CP001096">
    <property type="protein sequence ID" value="ACF01525.1"/>
    <property type="molecule type" value="Genomic_DNA"/>
</dbReference>
<dbReference type="RefSeq" id="WP_011158291.1">
    <property type="nucleotide sequence ID" value="NC_011004.1"/>
</dbReference>
<dbReference type="SMR" id="B3QJL9"/>
<dbReference type="GeneID" id="66893816"/>
<dbReference type="KEGG" id="rpt:Rpal_3019"/>
<dbReference type="HOGENOM" id="CLU_039379_1_0_5"/>
<dbReference type="OrthoDB" id="9806408at2"/>
<dbReference type="UniPathway" id="UPA00085"/>
<dbReference type="Proteomes" id="UP000001725">
    <property type="component" value="Chromosome"/>
</dbReference>
<dbReference type="GO" id="GO:0005737">
    <property type="term" value="C:cytoplasm"/>
    <property type="evidence" value="ECO:0007669"/>
    <property type="project" value="UniProtKB-SubCell"/>
</dbReference>
<dbReference type="GO" id="GO:0043811">
    <property type="term" value="F:phosphate:acyl-[acyl carrier protein] acyltransferase activity"/>
    <property type="evidence" value="ECO:0007669"/>
    <property type="project" value="UniProtKB-UniRule"/>
</dbReference>
<dbReference type="GO" id="GO:0006633">
    <property type="term" value="P:fatty acid biosynthetic process"/>
    <property type="evidence" value="ECO:0007669"/>
    <property type="project" value="UniProtKB-UniRule"/>
</dbReference>
<dbReference type="GO" id="GO:0008654">
    <property type="term" value="P:phospholipid biosynthetic process"/>
    <property type="evidence" value="ECO:0007669"/>
    <property type="project" value="UniProtKB-KW"/>
</dbReference>
<dbReference type="Gene3D" id="3.40.718.10">
    <property type="entry name" value="Isopropylmalate Dehydrogenase"/>
    <property type="match status" value="1"/>
</dbReference>
<dbReference type="HAMAP" id="MF_00019">
    <property type="entry name" value="PlsX"/>
    <property type="match status" value="1"/>
</dbReference>
<dbReference type="InterPro" id="IPR003664">
    <property type="entry name" value="FA_synthesis"/>
</dbReference>
<dbReference type="InterPro" id="IPR012281">
    <property type="entry name" value="Phospholipid_synth_PlsX-like"/>
</dbReference>
<dbReference type="NCBIfam" id="TIGR00182">
    <property type="entry name" value="plsX"/>
    <property type="match status" value="1"/>
</dbReference>
<dbReference type="PANTHER" id="PTHR30100">
    <property type="entry name" value="FATTY ACID/PHOSPHOLIPID SYNTHESIS PROTEIN PLSX"/>
    <property type="match status" value="1"/>
</dbReference>
<dbReference type="PANTHER" id="PTHR30100:SF1">
    <property type="entry name" value="PHOSPHATE ACYLTRANSFERASE"/>
    <property type="match status" value="1"/>
</dbReference>
<dbReference type="Pfam" id="PF02504">
    <property type="entry name" value="FA_synthesis"/>
    <property type="match status" value="1"/>
</dbReference>
<dbReference type="PIRSF" id="PIRSF002465">
    <property type="entry name" value="Phsphlp_syn_PlsX"/>
    <property type="match status" value="1"/>
</dbReference>
<dbReference type="SUPFAM" id="SSF53659">
    <property type="entry name" value="Isocitrate/Isopropylmalate dehydrogenase-like"/>
    <property type="match status" value="1"/>
</dbReference>
<name>PLSX_RHOPT</name>
<organism>
    <name type="scientific">Rhodopseudomonas palustris (strain TIE-1)</name>
    <dbReference type="NCBI Taxonomy" id="395960"/>
    <lineage>
        <taxon>Bacteria</taxon>
        <taxon>Pseudomonadati</taxon>
        <taxon>Pseudomonadota</taxon>
        <taxon>Alphaproteobacteria</taxon>
        <taxon>Hyphomicrobiales</taxon>
        <taxon>Nitrobacteraceae</taxon>
        <taxon>Rhodopseudomonas</taxon>
    </lineage>
</organism>
<reference key="1">
    <citation type="submission" date="2008-05" db="EMBL/GenBank/DDBJ databases">
        <title>Complete sequence of Rhodopseudomonas palustris TIE-1.</title>
        <authorList>
            <consortium name="US DOE Joint Genome Institute"/>
            <person name="Lucas S."/>
            <person name="Copeland A."/>
            <person name="Lapidus A."/>
            <person name="Glavina del Rio T."/>
            <person name="Dalin E."/>
            <person name="Tice H."/>
            <person name="Pitluck S."/>
            <person name="Chain P."/>
            <person name="Malfatti S."/>
            <person name="Shin M."/>
            <person name="Vergez L."/>
            <person name="Lang D."/>
            <person name="Schmutz J."/>
            <person name="Larimer F."/>
            <person name="Land M."/>
            <person name="Hauser L."/>
            <person name="Kyrpides N."/>
            <person name="Mikhailova N."/>
            <person name="Emerson D."/>
            <person name="Newman D.K."/>
            <person name="Roden E."/>
            <person name="Richardson P."/>
        </authorList>
    </citation>
    <scope>NUCLEOTIDE SEQUENCE [LARGE SCALE GENOMIC DNA]</scope>
    <source>
        <strain>TIE-1</strain>
    </source>
</reference>
<comment type="function">
    <text evidence="1">Catalyzes the reversible formation of acyl-phosphate (acyl-PO(4)) from acyl-[acyl-carrier-protein] (acyl-ACP). This enzyme utilizes acyl-ACP as fatty acyl donor, but not acyl-CoA.</text>
</comment>
<comment type="catalytic activity">
    <reaction evidence="1">
        <text>a fatty acyl-[ACP] + phosphate = an acyl phosphate + holo-[ACP]</text>
        <dbReference type="Rhea" id="RHEA:42292"/>
        <dbReference type="Rhea" id="RHEA-COMP:9685"/>
        <dbReference type="Rhea" id="RHEA-COMP:14125"/>
        <dbReference type="ChEBI" id="CHEBI:43474"/>
        <dbReference type="ChEBI" id="CHEBI:59918"/>
        <dbReference type="ChEBI" id="CHEBI:64479"/>
        <dbReference type="ChEBI" id="CHEBI:138651"/>
        <dbReference type="EC" id="2.3.1.274"/>
    </reaction>
</comment>
<comment type="pathway">
    <text evidence="1">Lipid metabolism; phospholipid metabolism.</text>
</comment>
<comment type="subunit">
    <text evidence="1">Homodimer. Probably interacts with PlsY.</text>
</comment>
<comment type="subcellular location">
    <subcellularLocation>
        <location evidence="1">Cytoplasm</location>
    </subcellularLocation>
    <text evidence="1">Associated with the membrane possibly through PlsY.</text>
</comment>
<comment type="similarity">
    <text evidence="1">Belongs to the PlsX family.</text>
</comment>
<gene>
    <name evidence="1" type="primary">plsX</name>
    <name type="ordered locus">Rpal_3019</name>
</gene>
<sequence length="353" mass="37469">MPQKVRIALDAMGGDFGPSVVIPGAAISLGRHPDVEFLLYGDAKLIEKELAAHPALRKASRVVHTDVAVAMHDKPSVALRRGRYKSSMWQAIDAVKKTEADVTVSAGNTGALMAMARFCLRTLPGIDRPAIAATWPTMRGDSVVLDLGASIGGDAQHLKALAIMGAAMASVLFDLERPTVGLLNIGVEEIKGGEEIREAAELLRAMNSQRFDFIGFVEGDGIGKGAADVIVSEGFAGNIALKAAEGTARQLAEYLRAAMSRTWRSKIGYLFARDAFKALKDKMDPNKSNGGVFLGLNGIVVKSHGGTNAEGFAYAVDVGYDMVRYDLLTKINQTLNRDAGALVATPSAQEVVS</sequence>
<protein>
    <recommendedName>
        <fullName evidence="1">Phosphate acyltransferase</fullName>
        <ecNumber evidence="1">2.3.1.274</ecNumber>
    </recommendedName>
    <alternativeName>
        <fullName evidence="1">Acyl-ACP phosphotransacylase</fullName>
    </alternativeName>
    <alternativeName>
        <fullName evidence="1">Acyl-[acyl-carrier-protein]--phosphate acyltransferase</fullName>
    </alternativeName>
    <alternativeName>
        <fullName evidence="1">Phosphate-acyl-ACP acyltransferase</fullName>
    </alternativeName>
</protein>
<evidence type="ECO:0000255" key="1">
    <source>
        <dbReference type="HAMAP-Rule" id="MF_00019"/>
    </source>
</evidence>
<feature type="chain" id="PRO_1000089932" description="Phosphate acyltransferase">
    <location>
        <begin position="1"/>
        <end position="353"/>
    </location>
</feature>